<keyword id="KW-0963">Cytoplasm</keyword>
<keyword id="KW-0501">Molybdenum cofactor biosynthesis</keyword>
<accession>Q0SZ85</accession>
<proteinExistence type="inferred from homology"/>
<comment type="function">
    <text evidence="1">Required for formate dehydrogenase (FDH) activity. Acts as a sulfur carrier protein that transfers sulfur from IscS to the molybdenum cofactor prior to its insertion into FDH.</text>
</comment>
<comment type="subcellular location">
    <subcellularLocation>
        <location evidence="1">Cytoplasm</location>
    </subcellularLocation>
</comment>
<comment type="similarity">
    <text evidence="1">Belongs to the FdhD family.</text>
</comment>
<reference key="1">
    <citation type="journal article" date="2006" name="BMC Genomics">
        <title>Complete genome sequence of Shigella flexneri 5b and comparison with Shigella flexneri 2a.</title>
        <authorList>
            <person name="Nie H."/>
            <person name="Yang F."/>
            <person name="Zhang X."/>
            <person name="Yang J."/>
            <person name="Chen L."/>
            <person name="Wang J."/>
            <person name="Xiong Z."/>
            <person name="Peng J."/>
            <person name="Sun L."/>
            <person name="Dong J."/>
            <person name="Xue Y."/>
            <person name="Xu X."/>
            <person name="Chen S."/>
            <person name="Yao Z."/>
            <person name="Shen Y."/>
            <person name="Jin Q."/>
        </authorList>
    </citation>
    <scope>NUCLEOTIDE SEQUENCE [LARGE SCALE GENOMIC DNA]</scope>
    <source>
        <strain>8401</strain>
    </source>
</reference>
<evidence type="ECO:0000255" key="1">
    <source>
        <dbReference type="HAMAP-Rule" id="MF_00187"/>
    </source>
</evidence>
<name>FDHD_SHIF8</name>
<protein>
    <recommendedName>
        <fullName evidence="1">Sulfur carrier protein FdhD</fullName>
    </recommendedName>
</protein>
<dbReference type="EMBL" id="CP000266">
    <property type="protein sequence ID" value="ABF05630.1"/>
    <property type="molecule type" value="Genomic_DNA"/>
</dbReference>
<dbReference type="RefSeq" id="WP_000753620.1">
    <property type="nucleotide sequence ID" value="NC_008258.1"/>
</dbReference>
<dbReference type="SMR" id="Q0SZ85"/>
<dbReference type="KEGG" id="sfv:SFV_3600"/>
<dbReference type="HOGENOM" id="CLU_056887_2_0_6"/>
<dbReference type="Proteomes" id="UP000000659">
    <property type="component" value="Chromosome"/>
</dbReference>
<dbReference type="GO" id="GO:0005737">
    <property type="term" value="C:cytoplasm"/>
    <property type="evidence" value="ECO:0007669"/>
    <property type="project" value="UniProtKB-SubCell"/>
</dbReference>
<dbReference type="GO" id="GO:0097163">
    <property type="term" value="F:sulfur carrier activity"/>
    <property type="evidence" value="ECO:0007669"/>
    <property type="project" value="UniProtKB-UniRule"/>
</dbReference>
<dbReference type="GO" id="GO:0016783">
    <property type="term" value="F:sulfurtransferase activity"/>
    <property type="evidence" value="ECO:0007669"/>
    <property type="project" value="InterPro"/>
</dbReference>
<dbReference type="GO" id="GO:0006777">
    <property type="term" value="P:Mo-molybdopterin cofactor biosynthetic process"/>
    <property type="evidence" value="ECO:0007669"/>
    <property type="project" value="UniProtKB-UniRule"/>
</dbReference>
<dbReference type="FunFam" id="3.10.20.10:FF:000003">
    <property type="entry name" value="Sulfur carrier protein FdhD"/>
    <property type="match status" value="1"/>
</dbReference>
<dbReference type="FunFam" id="3.40.140.10:FF:000027">
    <property type="entry name" value="Sulfur carrier protein FdhD"/>
    <property type="match status" value="1"/>
</dbReference>
<dbReference type="Gene3D" id="3.10.20.10">
    <property type="match status" value="1"/>
</dbReference>
<dbReference type="Gene3D" id="3.40.140.10">
    <property type="entry name" value="Cytidine Deaminase, domain 2"/>
    <property type="match status" value="1"/>
</dbReference>
<dbReference type="HAMAP" id="MF_00187">
    <property type="entry name" value="FdhD"/>
    <property type="match status" value="1"/>
</dbReference>
<dbReference type="InterPro" id="IPR016193">
    <property type="entry name" value="Cytidine_deaminase-like"/>
</dbReference>
<dbReference type="InterPro" id="IPR003786">
    <property type="entry name" value="FdhD"/>
</dbReference>
<dbReference type="NCBIfam" id="TIGR00129">
    <property type="entry name" value="fdhD_narQ"/>
    <property type="match status" value="1"/>
</dbReference>
<dbReference type="PANTHER" id="PTHR30592">
    <property type="entry name" value="FORMATE DEHYDROGENASE"/>
    <property type="match status" value="1"/>
</dbReference>
<dbReference type="PANTHER" id="PTHR30592:SF1">
    <property type="entry name" value="SULFUR CARRIER PROTEIN FDHD"/>
    <property type="match status" value="1"/>
</dbReference>
<dbReference type="Pfam" id="PF02634">
    <property type="entry name" value="FdhD-NarQ"/>
    <property type="match status" value="1"/>
</dbReference>
<dbReference type="PIRSF" id="PIRSF015626">
    <property type="entry name" value="FdhD"/>
    <property type="match status" value="1"/>
</dbReference>
<dbReference type="SUPFAM" id="SSF53927">
    <property type="entry name" value="Cytidine deaminase-like"/>
    <property type="match status" value="1"/>
</dbReference>
<sequence length="277" mass="30588">MKKTQRKEIENVTNITGVRQIELWRRDDLQHPRLDEVAEEVPVALVYNGISHVVMMASPKDLEYFALGFSLSEGIIESPRDIFGMDVVPSCNGLEVQIELSSRRFMGLKERRRALAGRTGCGVCGVEQLNDIGKPVQPLPFTQTFDLNKLDDALRHLNDFQPVGRLTGCTHAAAWMLPSGELVGGHEDVGRHVALDKLLGRRSQEGESWQQGAVLVSSRASYEMVQKSAMCGVEILFAVSAATTLAVEVAERCNLTLVGFCKPGRATVYTHPQRLSN</sequence>
<gene>
    <name evidence="1" type="primary">fdhD</name>
    <name type="ordered locus">SFV_3600</name>
</gene>
<organism>
    <name type="scientific">Shigella flexneri serotype 5b (strain 8401)</name>
    <dbReference type="NCBI Taxonomy" id="373384"/>
    <lineage>
        <taxon>Bacteria</taxon>
        <taxon>Pseudomonadati</taxon>
        <taxon>Pseudomonadota</taxon>
        <taxon>Gammaproteobacteria</taxon>
        <taxon>Enterobacterales</taxon>
        <taxon>Enterobacteriaceae</taxon>
        <taxon>Shigella</taxon>
    </lineage>
</organism>
<feature type="chain" id="PRO_1000020820" description="Sulfur carrier protein FdhD">
    <location>
        <begin position="1"/>
        <end position="277"/>
    </location>
</feature>
<feature type="active site" description="Cysteine persulfide intermediate" evidence="1">
    <location>
        <position position="121"/>
    </location>
</feature>
<feature type="binding site" evidence="1">
    <location>
        <begin position="260"/>
        <end position="265"/>
    </location>
    <ligand>
        <name>Mo-bis(molybdopterin guanine dinucleotide)</name>
        <dbReference type="ChEBI" id="CHEBI:60539"/>
    </ligand>
</feature>